<protein>
    <recommendedName>
        <fullName evidence="6">Dermonecrotic toxin LhSicTox-alphaVI1i</fullName>
        <ecNumber evidence="4">4.6.1.-</ecNumber>
    </recommendedName>
    <alternativeName>
        <fullName>Phospholipase D</fullName>
        <shortName>PLD</shortName>
    </alternativeName>
    <alternativeName>
        <fullName>Sphingomyelin phosphodiesterase D</fullName>
        <shortName>SMD</shortName>
        <shortName>SMase D</shortName>
        <shortName>Sphingomyelinase D</shortName>
    </alternativeName>
</protein>
<accession>C0JB31</accession>
<evidence type="ECO:0000250" key="1">
    <source>
        <dbReference type="UniProtKB" id="A0A0D4WTV1"/>
    </source>
</evidence>
<evidence type="ECO:0000250" key="2">
    <source>
        <dbReference type="UniProtKB" id="A0A0D4WV12"/>
    </source>
</evidence>
<evidence type="ECO:0000250" key="3">
    <source>
        <dbReference type="UniProtKB" id="P0CE80"/>
    </source>
</evidence>
<evidence type="ECO:0000250" key="4">
    <source>
        <dbReference type="UniProtKB" id="Q4ZFU2"/>
    </source>
</evidence>
<evidence type="ECO:0000250" key="5">
    <source>
        <dbReference type="UniProtKB" id="Q8I914"/>
    </source>
</evidence>
<evidence type="ECO:0000303" key="6">
    <source>
    </source>
</evidence>
<evidence type="ECO:0000305" key="7"/>
<evidence type="ECO:0000305" key="8">
    <source>
    </source>
</evidence>
<sequence length="275" mass="31707">WIMGHMVNAIYQIDEFVDLGANAIETDVEFSSSGKAKYTYHGVPCDCFRWCKKWENIDGFLEALRRATTPGDSKYRKELILVVLDLKLDYVYLSDAYDAGKDLAQRLVKHYWNGGRNGGRAYILLSVPVVEYYRLITGFRAHLMNEGYKDLLAKVGYDFSEDTYLSTIHDGFRNAGVRDKDHIWQSDGISNCFARTLTRLKEAVSNRDSTDGYSNKVYYWTVDKETSITDAINAGADGIMTNHPDRVINVPKDDEIKKKFRLARYRDNPWKTFRK</sequence>
<comment type="function">
    <text evidence="1 3">Dermonecrotic toxins cleave the phosphodiester linkage between the phosphate and headgroup of certain phospholipids (sphingolipid and lysolipid substrates), forming an alcohol (often choline) and a cyclic phosphate (By similarity). This toxin acts on sphingomyelin (SM) (By similarity). It may also act on ceramide phosphoethanolamine (CPE), lysophosphatidylcholine (LPC) and lysophosphatidylethanolamine (LPE), but not on lysophosphatidylserine (LPS), and lysophosphatidylglycerol (LPG) (By similarity). It acts by transphosphatidylation, releasing exclusively cyclic phosphate products as second products (By similarity). Induces dermonecrosis, hemolysis, increased vascular permeability, edema, inflammatory response, and platelet aggregation (By similarity).</text>
</comment>
<comment type="catalytic activity">
    <reaction evidence="1">
        <text>an N-(acyl)-sphingosylphosphocholine = an N-(acyl)-sphingosyl-1,3-cyclic phosphate + choline</text>
        <dbReference type="Rhea" id="RHEA:60652"/>
        <dbReference type="ChEBI" id="CHEBI:15354"/>
        <dbReference type="ChEBI" id="CHEBI:64583"/>
        <dbReference type="ChEBI" id="CHEBI:143892"/>
    </reaction>
</comment>
<comment type="catalytic activity">
    <reaction evidence="1">
        <text>an N-(acyl)-sphingosylphosphoethanolamine = an N-(acyl)-sphingosyl-1,3-cyclic phosphate + ethanolamine</text>
        <dbReference type="Rhea" id="RHEA:60648"/>
        <dbReference type="ChEBI" id="CHEBI:57603"/>
        <dbReference type="ChEBI" id="CHEBI:143891"/>
        <dbReference type="ChEBI" id="CHEBI:143892"/>
    </reaction>
</comment>
<comment type="catalytic activity">
    <reaction evidence="1">
        <text>a 1-acyl-sn-glycero-3-phosphocholine = a 1-acyl-sn-glycero-2,3-cyclic phosphate + choline</text>
        <dbReference type="Rhea" id="RHEA:60700"/>
        <dbReference type="ChEBI" id="CHEBI:15354"/>
        <dbReference type="ChEBI" id="CHEBI:58168"/>
        <dbReference type="ChEBI" id="CHEBI:143947"/>
    </reaction>
</comment>
<comment type="catalytic activity">
    <reaction evidence="1">
        <text>a 1-acyl-sn-glycero-3-phosphoethanolamine = a 1-acyl-sn-glycero-2,3-cyclic phosphate + ethanolamine</text>
        <dbReference type="Rhea" id="RHEA:60704"/>
        <dbReference type="ChEBI" id="CHEBI:57603"/>
        <dbReference type="ChEBI" id="CHEBI:64381"/>
        <dbReference type="ChEBI" id="CHEBI:143947"/>
    </reaction>
</comment>
<comment type="cofactor">
    <cofactor evidence="5">
        <name>Mg(2+)</name>
        <dbReference type="ChEBI" id="CHEBI:18420"/>
    </cofactor>
    <text evidence="5">Binds 1 Mg(2+) ion per subunit.</text>
</comment>
<comment type="subcellular location">
    <subcellularLocation>
        <location evidence="8">Secreted</location>
    </subcellularLocation>
</comment>
<comment type="tissue specificity">
    <text evidence="8">Expressed by the venom gland.</text>
</comment>
<comment type="similarity">
    <text evidence="7">Belongs to the arthropod phospholipase D family. Class II subfamily.</text>
</comment>
<comment type="caution">
    <text evidence="1 2 4">The most common activity assay for dermonecrotic toxins detects enzymatic activity by monitoring choline release from substrate. Liberation of choline from sphingomyelin (SM) or lysophosphatidylcholine (LPC) is commonly assumed to result from substrate hydrolysis, giving either ceramide-1-phosphate (C1P) or lysophosphatidic acid (LPA), respectively, as a second product. However, two studies from Lajoie and colleagues (2013 and 2015) report the observation of exclusive formation of cyclic phosphate products as second products, resulting from intramolecular transphosphatidylation. Cyclic phosphates have vastly different biological properties from their monoester counterparts, and they may be relevant to the pathology of brown spider envenomation.</text>
</comment>
<organism>
    <name type="scientific">Loxosceles hirsuta</name>
    <name type="common">Recluse spider</name>
    <dbReference type="NCBI Taxonomy" id="571525"/>
    <lineage>
        <taxon>Eukaryota</taxon>
        <taxon>Metazoa</taxon>
        <taxon>Ecdysozoa</taxon>
        <taxon>Arthropoda</taxon>
        <taxon>Chelicerata</taxon>
        <taxon>Arachnida</taxon>
        <taxon>Araneae</taxon>
        <taxon>Araneomorphae</taxon>
        <taxon>Haplogynae</taxon>
        <taxon>Scytodoidea</taxon>
        <taxon>Sicariidae</taxon>
        <taxon>Loxosceles</taxon>
    </lineage>
</organism>
<keyword id="KW-0204">Cytolysis</keyword>
<keyword id="KW-1061">Dermonecrotic toxin</keyword>
<keyword id="KW-1015">Disulfide bond</keyword>
<keyword id="KW-0354">Hemolysis</keyword>
<keyword id="KW-0442">Lipid degradation</keyword>
<keyword id="KW-0443">Lipid metabolism</keyword>
<keyword id="KW-0456">Lyase</keyword>
<keyword id="KW-0460">Magnesium</keyword>
<keyword id="KW-0479">Metal-binding</keyword>
<keyword id="KW-0964">Secreted</keyword>
<keyword id="KW-0800">Toxin</keyword>
<name>A611_LOXHI</name>
<proteinExistence type="evidence at transcript level"/>
<feature type="chain" id="PRO_0000392845" description="Dermonecrotic toxin LhSicTox-alphaVI1i">
    <location>
        <begin position="1" status="less than"/>
        <end position="275"/>
    </location>
</feature>
<feature type="active site" evidence="5">
    <location>
        <position position="5"/>
    </location>
</feature>
<feature type="active site" description="Nucleophile" evidence="5">
    <location>
        <position position="41"/>
    </location>
</feature>
<feature type="binding site" evidence="5">
    <location>
        <position position="25"/>
    </location>
    <ligand>
        <name>Mg(2+)</name>
        <dbReference type="ChEBI" id="CHEBI:18420"/>
    </ligand>
</feature>
<feature type="binding site" evidence="5">
    <location>
        <position position="27"/>
    </location>
    <ligand>
        <name>Mg(2+)</name>
        <dbReference type="ChEBI" id="CHEBI:18420"/>
    </ligand>
</feature>
<feature type="binding site" evidence="5">
    <location>
        <position position="85"/>
    </location>
    <ligand>
        <name>Mg(2+)</name>
        <dbReference type="ChEBI" id="CHEBI:18420"/>
    </ligand>
</feature>
<feature type="disulfide bond" evidence="3">
    <location>
        <begin position="45"/>
        <end position="51"/>
    </location>
</feature>
<feature type="disulfide bond" evidence="3">
    <location>
        <begin position="47"/>
        <end position="192"/>
    </location>
</feature>
<feature type="non-terminal residue">
    <location>
        <position position="1"/>
    </location>
</feature>
<reference key="1">
    <citation type="journal article" date="2009" name="Mol. Biol. Evol.">
        <title>Molecular evolution, functional variation, and proposed nomenclature of the gene family that includes sphingomyelinase D in sicariid spider venoms.</title>
        <authorList>
            <person name="Binford G.J."/>
            <person name="Bodner M.R."/>
            <person name="Cordes M.H."/>
            <person name="Baldwin K.L."/>
            <person name="Rynerson M.R."/>
            <person name="Burns S.N."/>
            <person name="Zobel-Thropp P.A."/>
        </authorList>
    </citation>
    <scope>NUCLEOTIDE SEQUENCE [MRNA]</scope>
    <scope>NOMENCLATURE</scope>
    <source>
        <tissue>Venom gland</tissue>
    </source>
</reference>
<dbReference type="EC" id="4.6.1.-" evidence="4"/>
<dbReference type="EMBL" id="FJ171466">
    <property type="protein sequence ID" value="ACN48962.1"/>
    <property type="molecule type" value="mRNA"/>
</dbReference>
<dbReference type="SMR" id="C0JB31"/>
<dbReference type="GO" id="GO:0005576">
    <property type="term" value="C:extracellular region"/>
    <property type="evidence" value="ECO:0007669"/>
    <property type="project" value="UniProtKB-SubCell"/>
</dbReference>
<dbReference type="GO" id="GO:0016829">
    <property type="term" value="F:lyase activity"/>
    <property type="evidence" value="ECO:0007669"/>
    <property type="project" value="UniProtKB-KW"/>
</dbReference>
<dbReference type="GO" id="GO:0046872">
    <property type="term" value="F:metal ion binding"/>
    <property type="evidence" value="ECO:0007669"/>
    <property type="project" value="UniProtKB-KW"/>
</dbReference>
<dbReference type="GO" id="GO:0008081">
    <property type="term" value="F:phosphoric diester hydrolase activity"/>
    <property type="evidence" value="ECO:0007669"/>
    <property type="project" value="InterPro"/>
</dbReference>
<dbReference type="GO" id="GO:0090729">
    <property type="term" value="F:toxin activity"/>
    <property type="evidence" value="ECO:0007669"/>
    <property type="project" value="UniProtKB-KW"/>
</dbReference>
<dbReference type="GO" id="GO:0031640">
    <property type="term" value="P:killing of cells of another organism"/>
    <property type="evidence" value="ECO:0007669"/>
    <property type="project" value="UniProtKB-KW"/>
</dbReference>
<dbReference type="GO" id="GO:0016042">
    <property type="term" value="P:lipid catabolic process"/>
    <property type="evidence" value="ECO:0007669"/>
    <property type="project" value="UniProtKB-KW"/>
</dbReference>
<dbReference type="CDD" id="cd08576">
    <property type="entry name" value="GDPD_like_SMaseD_PLD"/>
    <property type="match status" value="1"/>
</dbReference>
<dbReference type="Gene3D" id="3.20.20.190">
    <property type="entry name" value="Phosphatidylinositol (PI) phosphodiesterase"/>
    <property type="match status" value="1"/>
</dbReference>
<dbReference type="InterPro" id="IPR017946">
    <property type="entry name" value="PLC-like_Pdiesterase_TIM-brl"/>
</dbReference>
<dbReference type="Pfam" id="PF13653">
    <property type="entry name" value="GDPD_2"/>
    <property type="match status" value="1"/>
</dbReference>
<dbReference type="SUPFAM" id="SSF51695">
    <property type="entry name" value="PLC-like phosphodiesterases"/>
    <property type="match status" value="1"/>
</dbReference>